<gene>
    <name evidence="1" type="primary">ihfA</name>
    <name evidence="1" type="synonym">himA</name>
    <name type="ordered locus">SeD_A2006</name>
</gene>
<comment type="function">
    <text evidence="1">This protein is one of the two subunits of integration host factor, a specific DNA-binding protein that functions in genetic recombination as well as in transcriptional and translational control.</text>
</comment>
<comment type="subunit">
    <text evidence="1">Heterodimer of an alpha and a beta chain.</text>
</comment>
<comment type="similarity">
    <text evidence="1">Belongs to the bacterial histone-like protein family.</text>
</comment>
<accession>B5FJA2</accession>
<organism>
    <name type="scientific">Salmonella dublin (strain CT_02021853)</name>
    <dbReference type="NCBI Taxonomy" id="439851"/>
    <lineage>
        <taxon>Bacteria</taxon>
        <taxon>Pseudomonadati</taxon>
        <taxon>Pseudomonadota</taxon>
        <taxon>Gammaproteobacteria</taxon>
        <taxon>Enterobacterales</taxon>
        <taxon>Enterobacteriaceae</taxon>
        <taxon>Salmonella</taxon>
    </lineage>
</organism>
<evidence type="ECO:0000255" key="1">
    <source>
        <dbReference type="HAMAP-Rule" id="MF_00380"/>
    </source>
</evidence>
<evidence type="ECO:0000256" key="2">
    <source>
        <dbReference type="SAM" id="MobiDB-lite"/>
    </source>
</evidence>
<protein>
    <recommendedName>
        <fullName evidence="1">Integration host factor subunit alpha</fullName>
        <shortName evidence="1">IHF-alpha</shortName>
    </recommendedName>
</protein>
<keyword id="KW-0233">DNA recombination</keyword>
<keyword id="KW-0238">DNA-binding</keyword>
<keyword id="KW-0804">Transcription</keyword>
<keyword id="KW-0805">Transcription regulation</keyword>
<keyword id="KW-0810">Translation regulation</keyword>
<proteinExistence type="inferred from homology"/>
<name>IHFA_SALDC</name>
<sequence length="99" mass="11368">MALTKAEMSEYLFDKLGLSKRDAKELVELFFEEIRRALENGEQVKLSGFGNFDLRDKNQRPGRNPKTGEDIPITARRVVTFRPGQKLKSRVENASPKEE</sequence>
<reference key="1">
    <citation type="journal article" date="2011" name="J. Bacteriol.">
        <title>Comparative genomics of 28 Salmonella enterica isolates: evidence for CRISPR-mediated adaptive sublineage evolution.</title>
        <authorList>
            <person name="Fricke W.F."/>
            <person name="Mammel M.K."/>
            <person name="McDermott P.F."/>
            <person name="Tartera C."/>
            <person name="White D.G."/>
            <person name="Leclerc J.E."/>
            <person name="Ravel J."/>
            <person name="Cebula T.A."/>
        </authorList>
    </citation>
    <scope>NUCLEOTIDE SEQUENCE [LARGE SCALE GENOMIC DNA]</scope>
    <source>
        <strain>CT_02021853</strain>
    </source>
</reference>
<dbReference type="EMBL" id="CP001144">
    <property type="protein sequence ID" value="ACH76090.1"/>
    <property type="molecule type" value="Genomic_DNA"/>
</dbReference>
<dbReference type="RefSeq" id="WP_001229266.1">
    <property type="nucleotide sequence ID" value="NC_011205.1"/>
</dbReference>
<dbReference type="SMR" id="B5FJA2"/>
<dbReference type="GeneID" id="92828695"/>
<dbReference type="KEGG" id="sed:SeD_A2006"/>
<dbReference type="HOGENOM" id="CLU_105066_1_3_6"/>
<dbReference type="Proteomes" id="UP000008322">
    <property type="component" value="Chromosome"/>
</dbReference>
<dbReference type="GO" id="GO:0005829">
    <property type="term" value="C:cytosol"/>
    <property type="evidence" value="ECO:0007669"/>
    <property type="project" value="TreeGrafter"/>
</dbReference>
<dbReference type="GO" id="GO:0003677">
    <property type="term" value="F:DNA binding"/>
    <property type="evidence" value="ECO:0007669"/>
    <property type="project" value="UniProtKB-UniRule"/>
</dbReference>
<dbReference type="GO" id="GO:0030527">
    <property type="term" value="F:structural constituent of chromatin"/>
    <property type="evidence" value="ECO:0007669"/>
    <property type="project" value="InterPro"/>
</dbReference>
<dbReference type="GO" id="GO:0006310">
    <property type="term" value="P:DNA recombination"/>
    <property type="evidence" value="ECO:0007669"/>
    <property type="project" value="UniProtKB-UniRule"/>
</dbReference>
<dbReference type="GO" id="GO:0009893">
    <property type="term" value="P:positive regulation of metabolic process"/>
    <property type="evidence" value="ECO:0007669"/>
    <property type="project" value="UniProtKB-ARBA"/>
</dbReference>
<dbReference type="GO" id="GO:0006355">
    <property type="term" value="P:regulation of DNA-templated transcription"/>
    <property type="evidence" value="ECO:0007669"/>
    <property type="project" value="UniProtKB-UniRule"/>
</dbReference>
<dbReference type="GO" id="GO:0006417">
    <property type="term" value="P:regulation of translation"/>
    <property type="evidence" value="ECO:0007669"/>
    <property type="project" value="UniProtKB-UniRule"/>
</dbReference>
<dbReference type="CDD" id="cd13835">
    <property type="entry name" value="IHF_A"/>
    <property type="match status" value="1"/>
</dbReference>
<dbReference type="FunFam" id="4.10.520.10:FF:000002">
    <property type="entry name" value="Integration host factor subunit alpha"/>
    <property type="match status" value="1"/>
</dbReference>
<dbReference type="Gene3D" id="4.10.520.10">
    <property type="entry name" value="IHF-like DNA-binding proteins"/>
    <property type="match status" value="1"/>
</dbReference>
<dbReference type="HAMAP" id="MF_00380">
    <property type="entry name" value="IHF_alpha"/>
    <property type="match status" value="1"/>
</dbReference>
<dbReference type="InterPro" id="IPR000119">
    <property type="entry name" value="Hist_DNA-bd"/>
</dbReference>
<dbReference type="InterPro" id="IPR020816">
    <property type="entry name" value="Histone-like_DNA-bd_CS"/>
</dbReference>
<dbReference type="InterPro" id="IPR010992">
    <property type="entry name" value="IHF-like_DNA-bd_dom_sf"/>
</dbReference>
<dbReference type="InterPro" id="IPR005684">
    <property type="entry name" value="IHF_alpha"/>
</dbReference>
<dbReference type="NCBIfam" id="TIGR00987">
    <property type="entry name" value="himA"/>
    <property type="match status" value="1"/>
</dbReference>
<dbReference type="NCBIfam" id="NF001401">
    <property type="entry name" value="PRK00285.1"/>
    <property type="match status" value="1"/>
</dbReference>
<dbReference type="PANTHER" id="PTHR33175">
    <property type="entry name" value="DNA-BINDING PROTEIN HU"/>
    <property type="match status" value="1"/>
</dbReference>
<dbReference type="PANTHER" id="PTHR33175:SF2">
    <property type="entry name" value="INTEGRATION HOST FACTOR SUBUNIT ALPHA"/>
    <property type="match status" value="1"/>
</dbReference>
<dbReference type="Pfam" id="PF00216">
    <property type="entry name" value="Bac_DNA_binding"/>
    <property type="match status" value="1"/>
</dbReference>
<dbReference type="PRINTS" id="PR01727">
    <property type="entry name" value="DNABINDINGHU"/>
</dbReference>
<dbReference type="SMART" id="SM00411">
    <property type="entry name" value="BHL"/>
    <property type="match status" value="1"/>
</dbReference>
<dbReference type="SUPFAM" id="SSF47729">
    <property type="entry name" value="IHF-like DNA-binding proteins"/>
    <property type="match status" value="1"/>
</dbReference>
<dbReference type="PROSITE" id="PS00045">
    <property type="entry name" value="HISTONE_LIKE"/>
    <property type="match status" value="1"/>
</dbReference>
<feature type="chain" id="PRO_1000122160" description="Integration host factor subunit alpha">
    <location>
        <begin position="1"/>
        <end position="99"/>
    </location>
</feature>
<feature type="region of interest" description="Disordered" evidence="2">
    <location>
        <begin position="49"/>
        <end position="75"/>
    </location>
</feature>